<sequence length="769" mass="87073">MRTVWSPLAAALAALGMSTYKRATLDEEDLVDSLSEGDVYPNGLQVNFRSSRSGQRCWAARTSVEKRLVVLVTLLAAGLVACLAALGIQYQTRTPPVCLTEACVSVTSSILNSMDPTVDPCQDFFSYACGGWIKANPVPDGHSRWGTFSNLWEHNQAVIKHLLENATASVSEAERKAQVYYRACMNETRIEELRAKPLMELIEKLGGWNITGPWAKDNFQDTLQVVTAHYRTSPFFSVYVSADSKNSNSNVIQVDQSGLGLPSRDYYLNKTENEKVLTGYLNYMVQLGKLLGGGDEDAIRPQMQQILDFETALANITIPQEKRRDEELIYHKVTAAELQTLAPAINWLPFLNTIFYPVEINESEPIVVYDKEYLRQVSTLINNTDKCLLNNYMMWNLVRKTSSFLDQRFQDADEKFMEVMYGTKKTCIPRWKFCVSDTENNLGFALGPMFVKATFAEDSKNIASEIIMEIKKAFEESLSTLKWMDEETRRSAKEKADAIYNMIGYPNFIMDPKELDKVFNDYTAVPDLYFENAMRFFNFSWRVTADQLRKAPNRDQWSMTPPMVNAYYSPTKNEIVFPAGILQAPFYTRSSPNALNFGGIGVVVGHELTHAFDDQGREYDKDGNLRPWWKNSSVEAFKQQTECMVQQYSNYSVNGEPVNGRHTLGENIADNGGLKAAYRAYQNWVKKNGAEQTLPTLGLTSNQLFFLGFAQVWCSVRTPESSHEGLITDPHSPSRFRVIGSLSNSKEFSEHFRCPPGSPMNPHHKCEVW</sequence>
<organism>
    <name type="scientific">Mus musculus</name>
    <name type="common">Mouse</name>
    <dbReference type="NCBI Taxonomy" id="10090"/>
    <lineage>
        <taxon>Eukaryota</taxon>
        <taxon>Metazoa</taxon>
        <taxon>Chordata</taxon>
        <taxon>Craniata</taxon>
        <taxon>Vertebrata</taxon>
        <taxon>Euteleostomi</taxon>
        <taxon>Mammalia</taxon>
        <taxon>Eutheria</taxon>
        <taxon>Euarchontoglires</taxon>
        <taxon>Glires</taxon>
        <taxon>Rodentia</taxon>
        <taxon>Myomorpha</taxon>
        <taxon>Muroidea</taxon>
        <taxon>Muridae</taxon>
        <taxon>Murinae</taxon>
        <taxon>Mus</taxon>
        <taxon>Mus</taxon>
    </lineage>
</organism>
<proteinExistence type="evidence at protein level"/>
<feature type="chain" id="PRO_0000240629" description="Endothelin-converting enzyme 1">
    <location>
        <begin position="1"/>
        <end position="769"/>
    </location>
</feature>
<feature type="topological domain" description="Cytoplasmic" evidence="5">
    <location>
        <begin position="1"/>
        <end position="67"/>
    </location>
</feature>
<feature type="transmembrane region" description="Helical; Signal-anchor for type II membrane protein" evidence="5">
    <location>
        <begin position="68"/>
        <end position="88"/>
    </location>
</feature>
<feature type="topological domain" description="Extracellular" evidence="5">
    <location>
        <begin position="89"/>
        <end position="769"/>
    </location>
</feature>
<feature type="domain" description="Peptidase M13" evidence="6">
    <location>
        <begin position="97"/>
        <end position="769"/>
    </location>
</feature>
<feature type="active site" evidence="6 7">
    <location>
        <position position="607"/>
    </location>
</feature>
<feature type="active site" description="Proton donor" evidence="6">
    <location>
        <position position="670"/>
    </location>
</feature>
<feature type="binding site" evidence="6 7">
    <location>
        <position position="606"/>
    </location>
    <ligand>
        <name>Zn(2+)</name>
        <dbReference type="ChEBI" id="CHEBI:29105"/>
        <note>catalytic</note>
    </ligand>
</feature>
<feature type="binding site" evidence="6 7">
    <location>
        <position position="610"/>
    </location>
    <ligand>
        <name>Zn(2+)</name>
        <dbReference type="ChEBI" id="CHEBI:29105"/>
        <note>catalytic</note>
    </ligand>
</feature>
<feature type="binding site" evidence="6">
    <location>
        <position position="666"/>
    </location>
    <ligand>
        <name>Zn(2+)</name>
        <dbReference type="ChEBI" id="CHEBI:29105"/>
        <note>catalytic</note>
    </ligand>
</feature>
<feature type="modified residue" description="Phosphothreonine" evidence="3">
    <location>
        <position position="24"/>
    </location>
</feature>
<feature type="glycosylation site" description="N-linked (GlcNAc...) asparagine" evidence="8">
    <location>
        <position position="165"/>
    </location>
</feature>
<feature type="glycosylation site" description="N-linked (GlcNAc...) asparagine" evidence="5">
    <location>
        <position position="186"/>
    </location>
</feature>
<feature type="glycosylation site" description="N-linked (GlcNAc...) asparagine" evidence="8">
    <location>
        <position position="209"/>
    </location>
</feature>
<feature type="glycosylation site" description="N-linked (GlcNAc...) asparagine" evidence="5">
    <location>
        <position position="269"/>
    </location>
</feature>
<feature type="glycosylation site" description="N-linked (GlcNAc...) asparagine" evidence="9">
    <location>
        <position position="315"/>
    </location>
</feature>
<feature type="glycosylation site" description="N-linked (GlcNAc...) asparagine" evidence="8 9">
    <location>
        <position position="361"/>
    </location>
</feature>
<feature type="glycosylation site" description="N-linked (GlcNAc...) asparagine" evidence="9">
    <location>
        <position position="382"/>
    </location>
</feature>
<feature type="glycosylation site" description="N-linked (GlcNAc...) asparagine" evidence="5">
    <location>
        <position position="538"/>
    </location>
</feature>
<feature type="glycosylation site" description="N-linked (GlcNAc...) asparagine" evidence="5">
    <location>
        <position position="631"/>
    </location>
</feature>
<feature type="glycosylation site" description="N-linked (GlcNAc...) asparagine" evidence="5">
    <location>
        <position position="650"/>
    </location>
</feature>
<feature type="disulfide bond" evidence="6">
    <location>
        <begin position="98"/>
        <end position="103"/>
    </location>
</feature>
<feature type="disulfide bond" evidence="6">
    <location>
        <begin position="121"/>
        <end position="754"/>
    </location>
</feature>
<feature type="disulfide bond" evidence="6">
    <location>
        <begin position="129"/>
        <end position="714"/>
    </location>
</feature>
<feature type="disulfide bond" evidence="6">
    <location>
        <begin position="184"/>
        <end position="434"/>
    </location>
</feature>
<feature type="disulfide bond" evidence="6">
    <location>
        <begin position="643"/>
        <end position="766"/>
    </location>
</feature>
<feature type="splice variant" id="VSP_019399" description="In isoform A." evidence="12">
    <original>MRTVWSPLAAALAALGMSTYKRATLDEEDLVDSLSEGDVYPNG</original>
    <variation>MPPQSLGLQRGSFFLGKRGPGLMVSLPLLASS</variation>
    <location>
        <begin position="1"/>
        <end position="43"/>
    </location>
</feature>
<feature type="splice variant" id="VSP_019400" description="In isoform C." evidence="10 11">
    <location>
        <begin position="1"/>
        <end position="16"/>
    </location>
</feature>
<feature type="splice variant" id="VSP_019401" description="In isoform D." evidence="12">
    <original>MRTVWSPLAAALAALG</original>
    <variation>METLRESVLHLALQ</variation>
    <location>
        <begin position="1"/>
        <end position="16"/>
    </location>
</feature>
<dbReference type="EC" id="3.4.24.71"/>
<dbReference type="EMBL" id="DQ022741">
    <property type="protein sequence ID" value="AAY81993.1"/>
    <property type="molecule type" value="Genomic_DNA"/>
</dbReference>
<dbReference type="EMBL" id="DQ022723">
    <property type="protein sequence ID" value="AAY81993.1"/>
    <property type="status" value="JOINED"/>
    <property type="molecule type" value="Genomic_DNA"/>
</dbReference>
<dbReference type="EMBL" id="DQ022725">
    <property type="protein sequence ID" value="AAY81993.1"/>
    <property type="status" value="JOINED"/>
    <property type="molecule type" value="Genomic_DNA"/>
</dbReference>
<dbReference type="EMBL" id="DQ022727">
    <property type="protein sequence ID" value="AAY81993.1"/>
    <property type="status" value="JOINED"/>
    <property type="molecule type" value="Genomic_DNA"/>
</dbReference>
<dbReference type="EMBL" id="DQ022726">
    <property type="protein sequence ID" value="AAY81993.1"/>
    <property type="status" value="JOINED"/>
    <property type="molecule type" value="Genomic_DNA"/>
</dbReference>
<dbReference type="EMBL" id="DQ022728">
    <property type="protein sequence ID" value="AAY81993.1"/>
    <property type="status" value="JOINED"/>
    <property type="molecule type" value="Genomic_DNA"/>
</dbReference>
<dbReference type="EMBL" id="DQ022730">
    <property type="protein sequence ID" value="AAY81993.1"/>
    <property type="status" value="JOINED"/>
    <property type="molecule type" value="Genomic_DNA"/>
</dbReference>
<dbReference type="EMBL" id="DQ022732">
    <property type="protein sequence ID" value="AAY81993.1"/>
    <property type="status" value="JOINED"/>
    <property type="molecule type" value="Genomic_DNA"/>
</dbReference>
<dbReference type="EMBL" id="DQ022734">
    <property type="protein sequence ID" value="AAY81993.1"/>
    <property type="status" value="JOINED"/>
    <property type="molecule type" value="Genomic_DNA"/>
</dbReference>
<dbReference type="EMBL" id="DQ022736">
    <property type="protein sequence ID" value="AAY81993.1"/>
    <property type="status" value="JOINED"/>
    <property type="molecule type" value="Genomic_DNA"/>
</dbReference>
<dbReference type="EMBL" id="DQ022740">
    <property type="protein sequence ID" value="AAY81993.1"/>
    <property type="status" value="JOINED"/>
    <property type="molecule type" value="Genomic_DNA"/>
</dbReference>
<dbReference type="EMBL" id="DQ022739">
    <property type="protein sequence ID" value="AAY81993.1"/>
    <property type="status" value="JOINED"/>
    <property type="molecule type" value="Genomic_DNA"/>
</dbReference>
<dbReference type="EMBL" id="DQ022738">
    <property type="protein sequence ID" value="AAY81993.1"/>
    <property type="status" value="JOINED"/>
    <property type="molecule type" value="Genomic_DNA"/>
</dbReference>
<dbReference type="EMBL" id="DQ022737">
    <property type="protein sequence ID" value="AAY81993.1"/>
    <property type="status" value="JOINED"/>
    <property type="molecule type" value="Genomic_DNA"/>
</dbReference>
<dbReference type="EMBL" id="DQ022735">
    <property type="protein sequence ID" value="AAY81993.1"/>
    <property type="status" value="JOINED"/>
    <property type="molecule type" value="Genomic_DNA"/>
</dbReference>
<dbReference type="EMBL" id="DQ022733">
    <property type="protein sequence ID" value="AAY81993.1"/>
    <property type="status" value="JOINED"/>
    <property type="molecule type" value="Genomic_DNA"/>
</dbReference>
<dbReference type="EMBL" id="DQ022731">
    <property type="protein sequence ID" value="AAY81993.1"/>
    <property type="status" value="JOINED"/>
    <property type="molecule type" value="Genomic_DNA"/>
</dbReference>
<dbReference type="EMBL" id="DQ022729">
    <property type="protein sequence ID" value="AAY81993.1"/>
    <property type="status" value="JOINED"/>
    <property type="molecule type" value="Genomic_DNA"/>
</dbReference>
<dbReference type="EMBL" id="DQ022741">
    <property type="protein sequence ID" value="AAY81995.1"/>
    <property type="molecule type" value="Genomic_DNA"/>
</dbReference>
<dbReference type="EMBL" id="DQ022721">
    <property type="protein sequence ID" value="AAY81995.1"/>
    <property type="status" value="JOINED"/>
    <property type="molecule type" value="Genomic_DNA"/>
</dbReference>
<dbReference type="EMBL" id="DQ022723">
    <property type="protein sequence ID" value="AAY81995.1"/>
    <property type="status" value="JOINED"/>
    <property type="molecule type" value="Genomic_DNA"/>
</dbReference>
<dbReference type="EMBL" id="DQ022725">
    <property type="protein sequence ID" value="AAY81995.1"/>
    <property type="status" value="JOINED"/>
    <property type="molecule type" value="Genomic_DNA"/>
</dbReference>
<dbReference type="EMBL" id="DQ022726">
    <property type="protein sequence ID" value="AAY81995.1"/>
    <property type="status" value="JOINED"/>
    <property type="molecule type" value="Genomic_DNA"/>
</dbReference>
<dbReference type="EMBL" id="DQ022728">
    <property type="protein sequence ID" value="AAY81995.1"/>
    <property type="status" value="JOINED"/>
    <property type="molecule type" value="Genomic_DNA"/>
</dbReference>
<dbReference type="EMBL" id="DQ022730">
    <property type="protein sequence ID" value="AAY81995.1"/>
    <property type="status" value="JOINED"/>
    <property type="molecule type" value="Genomic_DNA"/>
</dbReference>
<dbReference type="EMBL" id="DQ022732">
    <property type="protein sequence ID" value="AAY81995.1"/>
    <property type="status" value="JOINED"/>
    <property type="molecule type" value="Genomic_DNA"/>
</dbReference>
<dbReference type="EMBL" id="DQ022734">
    <property type="protein sequence ID" value="AAY81995.1"/>
    <property type="status" value="JOINED"/>
    <property type="molecule type" value="Genomic_DNA"/>
</dbReference>
<dbReference type="EMBL" id="DQ022736">
    <property type="protein sequence ID" value="AAY81995.1"/>
    <property type="status" value="JOINED"/>
    <property type="molecule type" value="Genomic_DNA"/>
</dbReference>
<dbReference type="EMBL" id="DQ022740">
    <property type="protein sequence ID" value="AAY81995.1"/>
    <property type="status" value="JOINED"/>
    <property type="molecule type" value="Genomic_DNA"/>
</dbReference>
<dbReference type="EMBL" id="DQ022739">
    <property type="protein sequence ID" value="AAY81995.1"/>
    <property type="status" value="JOINED"/>
    <property type="molecule type" value="Genomic_DNA"/>
</dbReference>
<dbReference type="EMBL" id="DQ022738">
    <property type="protein sequence ID" value="AAY81995.1"/>
    <property type="status" value="JOINED"/>
    <property type="molecule type" value="Genomic_DNA"/>
</dbReference>
<dbReference type="EMBL" id="DQ022737">
    <property type="protein sequence ID" value="AAY81995.1"/>
    <property type="status" value="JOINED"/>
    <property type="molecule type" value="Genomic_DNA"/>
</dbReference>
<dbReference type="EMBL" id="DQ022735">
    <property type="protein sequence ID" value="AAY81995.1"/>
    <property type="status" value="JOINED"/>
    <property type="molecule type" value="Genomic_DNA"/>
</dbReference>
<dbReference type="EMBL" id="DQ022733">
    <property type="protein sequence ID" value="AAY81995.1"/>
    <property type="status" value="JOINED"/>
    <property type="molecule type" value="Genomic_DNA"/>
</dbReference>
<dbReference type="EMBL" id="DQ022731">
    <property type="protein sequence ID" value="AAY81995.1"/>
    <property type="status" value="JOINED"/>
    <property type="molecule type" value="Genomic_DNA"/>
</dbReference>
<dbReference type="EMBL" id="DQ022729">
    <property type="protein sequence ID" value="AAY81995.1"/>
    <property type="status" value="JOINED"/>
    <property type="molecule type" value="Genomic_DNA"/>
</dbReference>
<dbReference type="EMBL" id="DQ022727">
    <property type="protein sequence ID" value="AAY81995.1"/>
    <property type="status" value="JOINED"/>
    <property type="molecule type" value="Genomic_DNA"/>
</dbReference>
<dbReference type="EMBL" id="DQ022741">
    <property type="protein sequence ID" value="AAY81996.1"/>
    <property type="molecule type" value="Genomic_DNA"/>
</dbReference>
<dbReference type="EMBL" id="DQ022722">
    <property type="protein sequence ID" value="AAY81996.1"/>
    <property type="status" value="JOINED"/>
    <property type="molecule type" value="Genomic_DNA"/>
</dbReference>
<dbReference type="EMBL" id="DQ022723">
    <property type="protein sequence ID" value="AAY81996.1"/>
    <property type="status" value="JOINED"/>
    <property type="molecule type" value="Genomic_DNA"/>
</dbReference>
<dbReference type="EMBL" id="DQ022725">
    <property type="protein sequence ID" value="AAY81996.1"/>
    <property type="status" value="JOINED"/>
    <property type="molecule type" value="Genomic_DNA"/>
</dbReference>
<dbReference type="EMBL" id="DQ022726">
    <property type="protein sequence ID" value="AAY81996.1"/>
    <property type="status" value="JOINED"/>
    <property type="molecule type" value="Genomic_DNA"/>
</dbReference>
<dbReference type="EMBL" id="DQ022728">
    <property type="protein sequence ID" value="AAY81996.1"/>
    <property type="status" value="JOINED"/>
    <property type="molecule type" value="Genomic_DNA"/>
</dbReference>
<dbReference type="EMBL" id="DQ022730">
    <property type="protein sequence ID" value="AAY81996.1"/>
    <property type="status" value="JOINED"/>
    <property type="molecule type" value="Genomic_DNA"/>
</dbReference>
<dbReference type="EMBL" id="DQ022732">
    <property type="protein sequence ID" value="AAY81996.1"/>
    <property type="status" value="JOINED"/>
    <property type="molecule type" value="Genomic_DNA"/>
</dbReference>
<dbReference type="EMBL" id="DQ022734">
    <property type="protein sequence ID" value="AAY81996.1"/>
    <property type="status" value="JOINED"/>
    <property type="molecule type" value="Genomic_DNA"/>
</dbReference>
<dbReference type="EMBL" id="DQ022736">
    <property type="protein sequence ID" value="AAY81996.1"/>
    <property type="status" value="JOINED"/>
    <property type="molecule type" value="Genomic_DNA"/>
</dbReference>
<dbReference type="EMBL" id="DQ022740">
    <property type="protein sequence ID" value="AAY81996.1"/>
    <property type="status" value="JOINED"/>
    <property type="molecule type" value="Genomic_DNA"/>
</dbReference>
<dbReference type="EMBL" id="DQ022739">
    <property type="protein sequence ID" value="AAY81996.1"/>
    <property type="status" value="JOINED"/>
    <property type="molecule type" value="Genomic_DNA"/>
</dbReference>
<dbReference type="EMBL" id="DQ022738">
    <property type="protein sequence ID" value="AAY81996.1"/>
    <property type="status" value="JOINED"/>
    <property type="molecule type" value="Genomic_DNA"/>
</dbReference>
<dbReference type="EMBL" id="DQ022737">
    <property type="protein sequence ID" value="AAY81996.1"/>
    <property type="status" value="JOINED"/>
    <property type="molecule type" value="Genomic_DNA"/>
</dbReference>
<dbReference type="EMBL" id="DQ022735">
    <property type="protein sequence ID" value="AAY81996.1"/>
    <property type="status" value="JOINED"/>
    <property type="molecule type" value="Genomic_DNA"/>
</dbReference>
<dbReference type="EMBL" id="DQ022733">
    <property type="protein sequence ID" value="AAY81996.1"/>
    <property type="status" value="JOINED"/>
    <property type="molecule type" value="Genomic_DNA"/>
</dbReference>
<dbReference type="EMBL" id="DQ022731">
    <property type="protein sequence ID" value="AAY81996.1"/>
    <property type="status" value="JOINED"/>
    <property type="molecule type" value="Genomic_DNA"/>
</dbReference>
<dbReference type="EMBL" id="DQ022729">
    <property type="protein sequence ID" value="AAY81996.1"/>
    <property type="status" value="JOINED"/>
    <property type="molecule type" value="Genomic_DNA"/>
</dbReference>
<dbReference type="EMBL" id="DQ022727">
    <property type="protein sequence ID" value="AAY81996.1"/>
    <property type="status" value="JOINED"/>
    <property type="molecule type" value="Genomic_DNA"/>
</dbReference>
<dbReference type="EMBL" id="DQ022741">
    <property type="protein sequence ID" value="AAY81997.1"/>
    <property type="molecule type" value="Genomic_DNA"/>
</dbReference>
<dbReference type="EMBL" id="DQ022724">
    <property type="protein sequence ID" value="AAY81997.1"/>
    <property type="status" value="JOINED"/>
    <property type="molecule type" value="Genomic_DNA"/>
</dbReference>
<dbReference type="EMBL" id="DQ022725">
    <property type="protein sequence ID" value="AAY81997.1"/>
    <property type="status" value="JOINED"/>
    <property type="molecule type" value="Genomic_DNA"/>
</dbReference>
<dbReference type="EMBL" id="DQ022727">
    <property type="protein sequence ID" value="AAY81997.1"/>
    <property type="status" value="JOINED"/>
    <property type="molecule type" value="Genomic_DNA"/>
</dbReference>
<dbReference type="EMBL" id="DQ022726">
    <property type="protein sequence ID" value="AAY81997.1"/>
    <property type="status" value="JOINED"/>
    <property type="molecule type" value="Genomic_DNA"/>
</dbReference>
<dbReference type="EMBL" id="DQ022728">
    <property type="protein sequence ID" value="AAY81997.1"/>
    <property type="status" value="JOINED"/>
    <property type="molecule type" value="Genomic_DNA"/>
</dbReference>
<dbReference type="EMBL" id="DQ022730">
    <property type="protein sequence ID" value="AAY81997.1"/>
    <property type="status" value="JOINED"/>
    <property type="molecule type" value="Genomic_DNA"/>
</dbReference>
<dbReference type="EMBL" id="DQ022732">
    <property type="protein sequence ID" value="AAY81997.1"/>
    <property type="status" value="JOINED"/>
    <property type="molecule type" value="Genomic_DNA"/>
</dbReference>
<dbReference type="EMBL" id="DQ022734">
    <property type="protein sequence ID" value="AAY81997.1"/>
    <property type="status" value="JOINED"/>
    <property type="molecule type" value="Genomic_DNA"/>
</dbReference>
<dbReference type="EMBL" id="DQ022736">
    <property type="protein sequence ID" value="AAY81997.1"/>
    <property type="status" value="JOINED"/>
    <property type="molecule type" value="Genomic_DNA"/>
</dbReference>
<dbReference type="EMBL" id="DQ022740">
    <property type="protein sequence ID" value="AAY81997.1"/>
    <property type="status" value="JOINED"/>
    <property type="molecule type" value="Genomic_DNA"/>
</dbReference>
<dbReference type="EMBL" id="DQ022739">
    <property type="protein sequence ID" value="AAY81997.1"/>
    <property type="status" value="JOINED"/>
    <property type="molecule type" value="Genomic_DNA"/>
</dbReference>
<dbReference type="EMBL" id="DQ022738">
    <property type="protein sequence ID" value="AAY81997.1"/>
    <property type="status" value="JOINED"/>
    <property type="molecule type" value="Genomic_DNA"/>
</dbReference>
<dbReference type="EMBL" id="DQ022737">
    <property type="protein sequence ID" value="AAY81997.1"/>
    <property type="status" value="JOINED"/>
    <property type="molecule type" value="Genomic_DNA"/>
</dbReference>
<dbReference type="EMBL" id="DQ022735">
    <property type="protein sequence ID" value="AAY81997.1"/>
    <property type="status" value="JOINED"/>
    <property type="molecule type" value="Genomic_DNA"/>
</dbReference>
<dbReference type="EMBL" id="DQ022733">
    <property type="protein sequence ID" value="AAY81997.1"/>
    <property type="status" value="JOINED"/>
    <property type="molecule type" value="Genomic_DNA"/>
</dbReference>
<dbReference type="EMBL" id="DQ022731">
    <property type="protein sequence ID" value="AAY81997.1"/>
    <property type="status" value="JOINED"/>
    <property type="molecule type" value="Genomic_DNA"/>
</dbReference>
<dbReference type="EMBL" id="DQ022729">
    <property type="protein sequence ID" value="AAY81997.1"/>
    <property type="status" value="JOINED"/>
    <property type="molecule type" value="Genomic_DNA"/>
</dbReference>
<dbReference type="EMBL" id="AK134088">
    <property type="protein sequence ID" value="BAE22007.1"/>
    <property type="molecule type" value="mRNA"/>
</dbReference>
<dbReference type="EMBL" id="AL807764">
    <property type="status" value="NOT_ANNOTATED_CDS"/>
    <property type="molecule type" value="Genomic_DNA"/>
</dbReference>
<dbReference type="EMBL" id="BC060648">
    <property type="protein sequence ID" value="AAH60648.1"/>
    <property type="molecule type" value="mRNA"/>
</dbReference>
<dbReference type="CCDS" id="CCDS18822.1">
    <molecule id="Q4PZA2-3"/>
</dbReference>
<dbReference type="RefSeq" id="NP_001356106.1">
    <molecule id="Q4PZA2-1"/>
    <property type="nucleotide sequence ID" value="NM_001369177.1"/>
</dbReference>
<dbReference type="RefSeq" id="NP_001356107.1">
    <molecule id="Q4PZA2-2"/>
    <property type="nucleotide sequence ID" value="NM_001369178.1"/>
</dbReference>
<dbReference type="RefSeq" id="NP_001356108.1">
    <molecule id="Q4PZA2-3"/>
    <property type="nucleotide sequence ID" value="NM_001369179.1"/>
</dbReference>
<dbReference type="RefSeq" id="NP_955011.1">
    <molecule id="Q4PZA2-3"/>
    <property type="nucleotide sequence ID" value="NM_199307.2"/>
</dbReference>
<dbReference type="RefSeq" id="XP_006538828.1">
    <property type="nucleotide sequence ID" value="XM_006538765.1"/>
</dbReference>
<dbReference type="RefSeq" id="XP_006538830.1">
    <property type="nucleotide sequence ID" value="XM_006538767.3"/>
</dbReference>
<dbReference type="SMR" id="Q4PZA2"/>
<dbReference type="BioGRID" id="231041">
    <property type="interactions" value="3"/>
</dbReference>
<dbReference type="FunCoup" id="Q4PZA2">
    <property type="interactions" value="468"/>
</dbReference>
<dbReference type="STRING" id="10090.ENSMUSP00000099576"/>
<dbReference type="MEROPS" id="M13.002"/>
<dbReference type="GlyConnect" id="2289">
    <property type="glycosylation" value="3 N-Linked glycans (3 sites)"/>
</dbReference>
<dbReference type="GlyCosmos" id="Q4PZA2">
    <property type="glycosylation" value="10 sites, 3 glycans"/>
</dbReference>
<dbReference type="GlyGen" id="Q4PZA2">
    <property type="glycosylation" value="10 sites, 7 N-linked glycans (7 sites)"/>
</dbReference>
<dbReference type="iPTMnet" id="Q4PZA2"/>
<dbReference type="PhosphoSitePlus" id="Q4PZA2"/>
<dbReference type="SwissPalm" id="Q4PZA2"/>
<dbReference type="jPOST" id="Q4PZA2"/>
<dbReference type="PaxDb" id="10090-ENSMUSP00000099576"/>
<dbReference type="PeptideAtlas" id="Q4PZA2"/>
<dbReference type="ProteomicsDB" id="277623">
    <molecule id="Q4PZA2-1"/>
</dbReference>
<dbReference type="ProteomicsDB" id="277624">
    <molecule id="Q4PZA2-2"/>
</dbReference>
<dbReference type="ProteomicsDB" id="277625">
    <molecule id="Q4PZA2-3"/>
</dbReference>
<dbReference type="ProteomicsDB" id="277626">
    <molecule id="Q4PZA2-4"/>
</dbReference>
<dbReference type="Pumba" id="Q4PZA2"/>
<dbReference type="Antibodypedia" id="772">
    <property type="antibodies" value="407 antibodies from 34 providers"/>
</dbReference>
<dbReference type="DNASU" id="230857"/>
<dbReference type="Ensembl" id="ENSMUST00000102518.10">
    <molecule id="Q4PZA2-3"/>
    <property type="protein sequence ID" value="ENSMUSP00000099576.4"/>
    <property type="gene ID" value="ENSMUSG00000057530.15"/>
</dbReference>
<dbReference type="GeneID" id="230857"/>
<dbReference type="KEGG" id="mmu:230857"/>
<dbReference type="UCSC" id="uc008vju.2">
    <molecule id="Q4PZA2-1"/>
    <property type="organism name" value="mouse"/>
</dbReference>
<dbReference type="UCSC" id="uc008vjv.1">
    <molecule id="Q4PZA2-2"/>
    <property type="organism name" value="mouse"/>
</dbReference>
<dbReference type="AGR" id="MGI:1101357"/>
<dbReference type="CTD" id="1889"/>
<dbReference type="MGI" id="MGI:1101357">
    <property type="gene designation" value="Ece1"/>
</dbReference>
<dbReference type="VEuPathDB" id="HostDB:ENSMUSG00000057530"/>
<dbReference type="eggNOG" id="KOG3624">
    <property type="taxonomic scope" value="Eukaryota"/>
</dbReference>
<dbReference type="GeneTree" id="ENSGT00940000156050"/>
<dbReference type="HOGENOM" id="CLU_006187_8_0_1"/>
<dbReference type="InParanoid" id="Q4PZA2"/>
<dbReference type="OMA" id="DQRFFMN"/>
<dbReference type="OrthoDB" id="6475849at2759"/>
<dbReference type="PhylomeDB" id="Q4PZA2"/>
<dbReference type="TreeFam" id="TF315192"/>
<dbReference type="BRENDA" id="3.4.24.71">
    <property type="organism ID" value="3474"/>
</dbReference>
<dbReference type="Reactome" id="R-MMU-375276">
    <property type="pathway name" value="Peptide ligand-binding receptors"/>
</dbReference>
<dbReference type="BioGRID-ORCS" id="230857">
    <property type="hits" value="1 hit in 77 CRISPR screens"/>
</dbReference>
<dbReference type="ChiTaRS" id="Ece1">
    <property type="organism name" value="mouse"/>
</dbReference>
<dbReference type="PRO" id="PR:Q4PZA2"/>
<dbReference type="Proteomes" id="UP000000589">
    <property type="component" value="Chromosome 4"/>
</dbReference>
<dbReference type="RNAct" id="Q4PZA2">
    <property type="molecule type" value="protein"/>
</dbReference>
<dbReference type="Bgee" id="ENSMUSG00000057530">
    <property type="expression patterns" value="Expressed in aortic valve and 267 other cell types or tissues"/>
</dbReference>
<dbReference type="ExpressionAtlas" id="Q4PZA2">
    <property type="expression patterns" value="baseline and differential"/>
</dbReference>
<dbReference type="GO" id="GO:0009986">
    <property type="term" value="C:cell surface"/>
    <property type="evidence" value="ECO:0000250"/>
    <property type="project" value="MGI"/>
</dbReference>
<dbReference type="GO" id="GO:0005768">
    <property type="term" value="C:endosome"/>
    <property type="evidence" value="ECO:0007669"/>
    <property type="project" value="Ensembl"/>
</dbReference>
<dbReference type="GO" id="GO:0009897">
    <property type="term" value="C:external side of plasma membrane"/>
    <property type="evidence" value="ECO:0007669"/>
    <property type="project" value="Ensembl"/>
</dbReference>
<dbReference type="GO" id="GO:0005794">
    <property type="term" value="C:Golgi apparatus"/>
    <property type="evidence" value="ECO:0000250"/>
    <property type="project" value="MGI"/>
</dbReference>
<dbReference type="GO" id="GO:0048471">
    <property type="term" value="C:perinuclear region of cytoplasm"/>
    <property type="evidence" value="ECO:0007669"/>
    <property type="project" value="Ensembl"/>
</dbReference>
<dbReference type="GO" id="GO:0033093">
    <property type="term" value="C:Weibel-Palade body"/>
    <property type="evidence" value="ECO:0007669"/>
    <property type="project" value="Ensembl"/>
</dbReference>
<dbReference type="GO" id="GO:0004222">
    <property type="term" value="F:metalloendopeptidase activity"/>
    <property type="evidence" value="ECO:0007669"/>
    <property type="project" value="UniProtKB-EC"/>
</dbReference>
<dbReference type="GO" id="GO:0042803">
    <property type="term" value="F:protein homodimerization activity"/>
    <property type="evidence" value="ECO:0007669"/>
    <property type="project" value="Ensembl"/>
</dbReference>
<dbReference type="GO" id="GO:0008270">
    <property type="term" value="F:zinc ion binding"/>
    <property type="evidence" value="ECO:0007669"/>
    <property type="project" value="Ensembl"/>
</dbReference>
<dbReference type="GO" id="GO:0007411">
    <property type="term" value="P:axon guidance"/>
    <property type="evidence" value="ECO:0000315"/>
    <property type="project" value="MGI"/>
</dbReference>
<dbReference type="GO" id="GO:0060385">
    <property type="term" value="P:axonogenesis involved in innervation"/>
    <property type="evidence" value="ECO:0000315"/>
    <property type="project" value="MGI"/>
</dbReference>
<dbReference type="GO" id="GO:0010815">
    <property type="term" value="P:bradykinin catabolic process"/>
    <property type="evidence" value="ECO:0007669"/>
    <property type="project" value="Ensembl"/>
</dbReference>
<dbReference type="GO" id="GO:0010816">
    <property type="term" value="P:calcitonin catabolic process"/>
    <property type="evidence" value="ECO:0007669"/>
    <property type="project" value="Ensembl"/>
</dbReference>
<dbReference type="GO" id="GO:0043583">
    <property type="term" value="P:ear development"/>
    <property type="evidence" value="ECO:0007669"/>
    <property type="project" value="Ensembl"/>
</dbReference>
<dbReference type="GO" id="GO:0042733">
    <property type="term" value="P:embryonic digit morphogenesis"/>
    <property type="evidence" value="ECO:0007669"/>
    <property type="project" value="Ensembl"/>
</dbReference>
<dbReference type="GO" id="GO:0035050">
    <property type="term" value="P:embryonic heart tube development"/>
    <property type="evidence" value="ECO:0000315"/>
    <property type="project" value="MGI"/>
</dbReference>
<dbReference type="GO" id="GO:0034959">
    <property type="term" value="P:endothelin maturation"/>
    <property type="evidence" value="ECO:0007669"/>
    <property type="project" value="Ensembl"/>
</dbReference>
<dbReference type="GO" id="GO:0010467">
    <property type="term" value="P:gene expression"/>
    <property type="evidence" value="ECO:0000315"/>
    <property type="project" value="MGI"/>
</dbReference>
<dbReference type="GO" id="GO:0031175">
    <property type="term" value="P:neuron projection development"/>
    <property type="evidence" value="ECO:0000315"/>
    <property type="project" value="MGI"/>
</dbReference>
<dbReference type="GO" id="GO:0016486">
    <property type="term" value="P:peptide hormone processing"/>
    <property type="evidence" value="ECO:0000250"/>
    <property type="project" value="MGI"/>
</dbReference>
<dbReference type="GO" id="GO:0060037">
    <property type="term" value="P:pharyngeal system development"/>
    <property type="evidence" value="ECO:0000315"/>
    <property type="project" value="MGI"/>
</dbReference>
<dbReference type="GO" id="GO:0001921">
    <property type="term" value="P:positive regulation of receptor recycling"/>
    <property type="evidence" value="ECO:0007669"/>
    <property type="project" value="Ensembl"/>
</dbReference>
<dbReference type="GO" id="GO:1902287">
    <property type="term" value="P:semaphorin-plexin signaling pathway involved in axon guidance"/>
    <property type="evidence" value="ECO:0000315"/>
    <property type="project" value="MGI"/>
</dbReference>
<dbReference type="GO" id="GO:0010814">
    <property type="term" value="P:substance P catabolic process"/>
    <property type="evidence" value="ECO:0007669"/>
    <property type="project" value="Ensembl"/>
</dbReference>
<dbReference type="GO" id="GO:0097492">
    <property type="term" value="P:sympathetic neuron axon guidance"/>
    <property type="evidence" value="ECO:0000315"/>
    <property type="project" value="MGI"/>
</dbReference>
<dbReference type="CDD" id="cd08662">
    <property type="entry name" value="M13"/>
    <property type="match status" value="1"/>
</dbReference>
<dbReference type="FunFam" id="3.40.390.10:FF:000003">
    <property type="entry name" value="endothelin-converting enzyme 1 isoform X1"/>
    <property type="match status" value="1"/>
</dbReference>
<dbReference type="FunFam" id="1.10.1380.10:FF:000001">
    <property type="entry name" value="endothelin-converting enzyme 2 isoform X1"/>
    <property type="match status" value="1"/>
</dbReference>
<dbReference type="Gene3D" id="3.40.390.10">
    <property type="entry name" value="Collagenase (Catalytic Domain)"/>
    <property type="match status" value="1"/>
</dbReference>
<dbReference type="Gene3D" id="1.10.1380.10">
    <property type="entry name" value="Neutral endopeptidase , domain2"/>
    <property type="match status" value="1"/>
</dbReference>
<dbReference type="InterPro" id="IPR024079">
    <property type="entry name" value="MetalloPept_cat_dom_sf"/>
</dbReference>
<dbReference type="InterPro" id="IPR000718">
    <property type="entry name" value="Peptidase_M13"/>
</dbReference>
<dbReference type="InterPro" id="IPR018497">
    <property type="entry name" value="Peptidase_M13_C"/>
</dbReference>
<dbReference type="InterPro" id="IPR042089">
    <property type="entry name" value="Peptidase_M13_dom_2"/>
</dbReference>
<dbReference type="InterPro" id="IPR008753">
    <property type="entry name" value="Peptidase_M13_N"/>
</dbReference>
<dbReference type="PANTHER" id="PTHR11733:SF130">
    <property type="entry name" value="ENDOTHELIN-CONVERTING ENZYME 1"/>
    <property type="match status" value="1"/>
</dbReference>
<dbReference type="PANTHER" id="PTHR11733">
    <property type="entry name" value="ZINC METALLOPROTEASE FAMILY M13 NEPRILYSIN-RELATED"/>
    <property type="match status" value="1"/>
</dbReference>
<dbReference type="Pfam" id="PF01431">
    <property type="entry name" value="Peptidase_M13"/>
    <property type="match status" value="1"/>
</dbReference>
<dbReference type="Pfam" id="PF05649">
    <property type="entry name" value="Peptidase_M13_N"/>
    <property type="match status" value="1"/>
</dbReference>
<dbReference type="PRINTS" id="PR00786">
    <property type="entry name" value="NEPRILYSIN"/>
</dbReference>
<dbReference type="SUPFAM" id="SSF55486">
    <property type="entry name" value="Metalloproteases ('zincins'), catalytic domain"/>
    <property type="match status" value="1"/>
</dbReference>
<dbReference type="PROSITE" id="PS51885">
    <property type="entry name" value="NEPRILYSIN"/>
    <property type="match status" value="1"/>
</dbReference>
<dbReference type="PROSITE" id="PS00142">
    <property type="entry name" value="ZINC_PROTEASE"/>
    <property type="match status" value="1"/>
</dbReference>
<comment type="function">
    <text evidence="1">Converts big endothelin-1 to endothelin-1.</text>
</comment>
<comment type="catalytic activity">
    <reaction>
        <text>Hydrolysis of the 21-Trp-|-Val-22 bond in big endothelin to form endothelin 1.</text>
        <dbReference type="EC" id="3.4.24.71"/>
    </reaction>
</comment>
<comment type="cofactor">
    <cofactor evidence="1">
        <name>Zn(2+)</name>
        <dbReference type="ChEBI" id="CHEBI:29105"/>
    </cofactor>
    <text evidence="1">Binds 1 zinc ion per subunit.</text>
</comment>
<comment type="activity regulation">
    <text evidence="1">Inhibited by phosphoramidon.</text>
</comment>
<comment type="subunit">
    <text evidence="2 4">Homodimer; disulfide-linked (By similarity). Interacts with PPP1R16B (By similarity). Interacts with TSPAN8; this interaction recruits the endothelin converting enzyme ECE1 to tetraspanin-enriched microdomains and positively modulates its enzymatic activity (By similarity).</text>
</comment>
<comment type="subcellular location">
    <subcellularLocation>
        <location evidence="1">Cell membrane</location>
        <topology evidence="1">Single-pass type II membrane protein</topology>
    </subcellularLocation>
</comment>
<comment type="alternative products">
    <event type="alternative splicing"/>
    <isoform>
        <id>Q4PZA2-1</id>
        <name>B</name>
        <sequence type="displayed"/>
    </isoform>
    <isoform>
        <id>Q4PZA2-2</id>
        <name>A</name>
        <sequence type="described" ref="VSP_019399"/>
    </isoform>
    <isoform>
        <id>Q4PZA2-3</id>
        <name>C</name>
        <sequence type="described" ref="VSP_019400"/>
    </isoform>
    <isoform>
        <id>Q4PZA2-4</id>
        <name>D</name>
        <sequence type="described" ref="VSP_019401"/>
    </isoform>
</comment>
<comment type="similarity">
    <text evidence="6 12">Belongs to the peptidase M13 family.</text>
</comment>
<evidence type="ECO:0000250" key="1"/>
<evidence type="ECO:0000250" key="2">
    <source>
        <dbReference type="UniProtKB" id="P42891"/>
    </source>
</evidence>
<evidence type="ECO:0000250" key="3">
    <source>
        <dbReference type="UniProtKB" id="P42892"/>
    </source>
</evidence>
<evidence type="ECO:0000250" key="4">
    <source>
        <dbReference type="UniProtKB" id="P42893"/>
    </source>
</evidence>
<evidence type="ECO:0000255" key="5"/>
<evidence type="ECO:0000255" key="6">
    <source>
        <dbReference type="PROSITE-ProRule" id="PRU01233"/>
    </source>
</evidence>
<evidence type="ECO:0000255" key="7">
    <source>
        <dbReference type="PROSITE-ProRule" id="PRU10095"/>
    </source>
</evidence>
<evidence type="ECO:0000269" key="8">
    <source>
    </source>
</evidence>
<evidence type="ECO:0000269" key="9">
    <source>
    </source>
</evidence>
<evidence type="ECO:0000303" key="10">
    <source>
    </source>
</evidence>
<evidence type="ECO:0000303" key="11">
    <source>
    </source>
</evidence>
<evidence type="ECO:0000305" key="12"/>
<reference key="1">
    <citation type="journal article" date="2006" name="Gene">
        <title>Genomic organisation of the mouse gene encoding endothelin-converting enzyme-1 (ECE-1) and mRNA expression of ECE-1 isoforms in murine tissues.</title>
        <authorList>
            <person name="Lindenau S."/>
            <person name="von Langsdorff C."/>
            <person name="Saxena A."/>
            <person name="Paul M."/>
            <person name="Orzechowski H.-D."/>
        </authorList>
    </citation>
    <scope>NUCLEOTIDE SEQUENCE [GENOMIC DNA]</scope>
    <scope>ALTERNATIVE SPLICING</scope>
    <source>
        <strain>BALB/cJ</strain>
    </source>
</reference>
<reference key="2">
    <citation type="journal article" date="2005" name="Science">
        <title>The transcriptional landscape of the mammalian genome.</title>
        <authorList>
            <person name="Carninci P."/>
            <person name="Kasukawa T."/>
            <person name="Katayama S."/>
            <person name="Gough J."/>
            <person name="Frith M.C."/>
            <person name="Maeda N."/>
            <person name="Oyama R."/>
            <person name="Ravasi T."/>
            <person name="Lenhard B."/>
            <person name="Wells C."/>
            <person name="Kodzius R."/>
            <person name="Shimokawa K."/>
            <person name="Bajic V.B."/>
            <person name="Brenner S.E."/>
            <person name="Batalov S."/>
            <person name="Forrest A.R."/>
            <person name="Zavolan M."/>
            <person name="Davis M.J."/>
            <person name="Wilming L.G."/>
            <person name="Aidinis V."/>
            <person name="Allen J.E."/>
            <person name="Ambesi-Impiombato A."/>
            <person name="Apweiler R."/>
            <person name="Aturaliya R.N."/>
            <person name="Bailey T.L."/>
            <person name="Bansal M."/>
            <person name="Baxter L."/>
            <person name="Beisel K.W."/>
            <person name="Bersano T."/>
            <person name="Bono H."/>
            <person name="Chalk A.M."/>
            <person name="Chiu K.P."/>
            <person name="Choudhary V."/>
            <person name="Christoffels A."/>
            <person name="Clutterbuck D.R."/>
            <person name="Crowe M.L."/>
            <person name="Dalla E."/>
            <person name="Dalrymple B.P."/>
            <person name="de Bono B."/>
            <person name="Della Gatta G."/>
            <person name="di Bernardo D."/>
            <person name="Down T."/>
            <person name="Engstrom P."/>
            <person name="Fagiolini M."/>
            <person name="Faulkner G."/>
            <person name="Fletcher C.F."/>
            <person name="Fukushima T."/>
            <person name="Furuno M."/>
            <person name="Futaki S."/>
            <person name="Gariboldi M."/>
            <person name="Georgii-Hemming P."/>
            <person name="Gingeras T.R."/>
            <person name="Gojobori T."/>
            <person name="Green R.E."/>
            <person name="Gustincich S."/>
            <person name="Harbers M."/>
            <person name="Hayashi Y."/>
            <person name="Hensch T.K."/>
            <person name="Hirokawa N."/>
            <person name="Hill D."/>
            <person name="Huminiecki L."/>
            <person name="Iacono M."/>
            <person name="Ikeo K."/>
            <person name="Iwama A."/>
            <person name="Ishikawa T."/>
            <person name="Jakt M."/>
            <person name="Kanapin A."/>
            <person name="Katoh M."/>
            <person name="Kawasawa Y."/>
            <person name="Kelso J."/>
            <person name="Kitamura H."/>
            <person name="Kitano H."/>
            <person name="Kollias G."/>
            <person name="Krishnan S.P."/>
            <person name="Kruger A."/>
            <person name="Kummerfeld S.K."/>
            <person name="Kurochkin I.V."/>
            <person name="Lareau L.F."/>
            <person name="Lazarevic D."/>
            <person name="Lipovich L."/>
            <person name="Liu J."/>
            <person name="Liuni S."/>
            <person name="McWilliam S."/>
            <person name="Madan Babu M."/>
            <person name="Madera M."/>
            <person name="Marchionni L."/>
            <person name="Matsuda H."/>
            <person name="Matsuzawa S."/>
            <person name="Miki H."/>
            <person name="Mignone F."/>
            <person name="Miyake S."/>
            <person name="Morris K."/>
            <person name="Mottagui-Tabar S."/>
            <person name="Mulder N."/>
            <person name="Nakano N."/>
            <person name="Nakauchi H."/>
            <person name="Ng P."/>
            <person name="Nilsson R."/>
            <person name="Nishiguchi S."/>
            <person name="Nishikawa S."/>
            <person name="Nori F."/>
            <person name="Ohara O."/>
            <person name="Okazaki Y."/>
            <person name="Orlando V."/>
            <person name="Pang K.C."/>
            <person name="Pavan W.J."/>
            <person name="Pavesi G."/>
            <person name="Pesole G."/>
            <person name="Petrovsky N."/>
            <person name="Piazza S."/>
            <person name="Reed J."/>
            <person name="Reid J.F."/>
            <person name="Ring B.Z."/>
            <person name="Ringwald M."/>
            <person name="Rost B."/>
            <person name="Ruan Y."/>
            <person name="Salzberg S.L."/>
            <person name="Sandelin A."/>
            <person name="Schneider C."/>
            <person name="Schoenbach C."/>
            <person name="Sekiguchi K."/>
            <person name="Semple C.A."/>
            <person name="Seno S."/>
            <person name="Sessa L."/>
            <person name="Sheng Y."/>
            <person name="Shibata Y."/>
            <person name="Shimada H."/>
            <person name="Shimada K."/>
            <person name="Silva D."/>
            <person name="Sinclair B."/>
            <person name="Sperling S."/>
            <person name="Stupka E."/>
            <person name="Sugiura K."/>
            <person name="Sultana R."/>
            <person name="Takenaka Y."/>
            <person name="Taki K."/>
            <person name="Tammoja K."/>
            <person name="Tan S.L."/>
            <person name="Tang S."/>
            <person name="Taylor M.S."/>
            <person name="Tegner J."/>
            <person name="Teichmann S.A."/>
            <person name="Ueda H.R."/>
            <person name="van Nimwegen E."/>
            <person name="Verardo R."/>
            <person name="Wei C.L."/>
            <person name="Yagi K."/>
            <person name="Yamanishi H."/>
            <person name="Zabarovsky E."/>
            <person name="Zhu S."/>
            <person name="Zimmer A."/>
            <person name="Hide W."/>
            <person name="Bult C."/>
            <person name="Grimmond S.M."/>
            <person name="Teasdale R.D."/>
            <person name="Liu E.T."/>
            <person name="Brusic V."/>
            <person name="Quackenbush J."/>
            <person name="Wahlestedt C."/>
            <person name="Mattick J.S."/>
            <person name="Hume D.A."/>
            <person name="Kai C."/>
            <person name="Sasaki D."/>
            <person name="Tomaru Y."/>
            <person name="Fukuda S."/>
            <person name="Kanamori-Katayama M."/>
            <person name="Suzuki M."/>
            <person name="Aoki J."/>
            <person name="Arakawa T."/>
            <person name="Iida J."/>
            <person name="Imamura K."/>
            <person name="Itoh M."/>
            <person name="Kato T."/>
            <person name="Kawaji H."/>
            <person name="Kawagashira N."/>
            <person name="Kawashima T."/>
            <person name="Kojima M."/>
            <person name="Kondo S."/>
            <person name="Konno H."/>
            <person name="Nakano K."/>
            <person name="Ninomiya N."/>
            <person name="Nishio T."/>
            <person name="Okada M."/>
            <person name="Plessy C."/>
            <person name="Shibata K."/>
            <person name="Shiraki T."/>
            <person name="Suzuki S."/>
            <person name="Tagami M."/>
            <person name="Waki K."/>
            <person name="Watahiki A."/>
            <person name="Okamura-Oho Y."/>
            <person name="Suzuki H."/>
            <person name="Kawai J."/>
            <person name="Hayashizaki Y."/>
        </authorList>
    </citation>
    <scope>NUCLEOTIDE SEQUENCE [LARGE SCALE MRNA] (ISOFORM C)</scope>
    <source>
        <strain>C57BL/6J</strain>
        <tissue>Thymus</tissue>
    </source>
</reference>
<reference key="3">
    <citation type="journal article" date="2009" name="PLoS Biol.">
        <title>Lineage-specific biology revealed by a finished genome assembly of the mouse.</title>
        <authorList>
            <person name="Church D.M."/>
            <person name="Goodstadt L."/>
            <person name="Hillier L.W."/>
            <person name="Zody M.C."/>
            <person name="Goldstein S."/>
            <person name="She X."/>
            <person name="Bult C.J."/>
            <person name="Agarwala R."/>
            <person name="Cherry J.L."/>
            <person name="DiCuccio M."/>
            <person name="Hlavina W."/>
            <person name="Kapustin Y."/>
            <person name="Meric P."/>
            <person name="Maglott D."/>
            <person name="Birtle Z."/>
            <person name="Marques A.C."/>
            <person name="Graves T."/>
            <person name="Zhou S."/>
            <person name="Teague B."/>
            <person name="Potamousis K."/>
            <person name="Churas C."/>
            <person name="Place M."/>
            <person name="Herschleb J."/>
            <person name="Runnheim R."/>
            <person name="Forrest D."/>
            <person name="Amos-Landgraf J."/>
            <person name="Schwartz D.C."/>
            <person name="Cheng Z."/>
            <person name="Lindblad-Toh K."/>
            <person name="Eichler E.E."/>
            <person name="Ponting C.P."/>
        </authorList>
    </citation>
    <scope>NUCLEOTIDE SEQUENCE [LARGE SCALE GENOMIC DNA]</scope>
    <source>
        <strain>C57BL/6J</strain>
    </source>
</reference>
<reference key="4">
    <citation type="journal article" date="2004" name="Genome Res.">
        <title>The status, quality, and expansion of the NIH full-length cDNA project: the Mammalian Gene Collection (MGC).</title>
        <authorList>
            <consortium name="The MGC Project Team"/>
        </authorList>
    </citation>
    <scope>NUCLEOTIDE SEQUENCE [LARGE SCALE MRNA] (ISOFORM C)</scope>
    <source>
        <strain>C57BL/6J</strain>
        <tissue>Brain</tissue>
    </source>
</reference>
<reference key="5">
    <citation type="journal article" date="2009" name="Mol. Cell. Proteomics">
        <title>The mouse C2C12 myoblast cell surface N-linked glycoproteome: identification, glycosite occupancy, and membrane orientation.</title>
        <authorList>
            <person name="Gundry R.L."/>
            <person name="Raginski K."/>
            <person name="Tarasova Y."/>
            <person name="Tchernyshyov I."/>
            <person name="Bausch-Fluck D."/>
            <person name="Elliott S.T."/>
            <person name="Boheler K.R."/>
            <person name="Van Eyk J.E."/>
            <person name="Wollscheid B."/>
        </authorList>
    </citation>
    <scope>GLYCOSYLATION [LARGE SCALE ANALYSIS] AT ASN-315; ASN-361 AND ASN-382</scope>
    <source>
        <tissue>Myoblast</tissue>
    </source>
</reference>
<reference key="6">
    <citation type="journal article" date="2009" name="Nat. Biotechnol.">
        <title>Mass-spectrometric identification and relative quantification of N-linked cell surface glycoproteins.</title>
        <authorList>
            <person name="Wollscheid B."/>
            <person name="Bausch-Fluck D."/>
            <person name="Henderson C."/>
            <person name="O'Brien R."/>
            <person name="Bibel M."/>
            <person name="Schiess R."/>
            <person name="Aebersold R."/>
            <person name="Watts J.D."/>
        </authorList>
    </citation>
    <scope>GLYCOSYLATION [LARGE SCALE ANALYSIS] AT ASN-165; ASN-209 AND ASN-361</scope>
</reference>
<reference key="7">
    <citation type="journal article" date="2010" name="Cell">
        <title>A tissue-specific atlas of mouse protein phosphorylation and expression.</title>
        <authorList>
            <person name="Huttlin E.L."/>
            <person name="Jedrychowski M.P."/>
            <person name="Elias J.E."/>
            <person name="Goswami T."/>
            <person name="Rad R."/>
            <person name="Beausoleil S.A."/>
            <person name="Villen J."/>
            <person name="Haas W."/>
            <person name="Sowa M.E."/>
            <person name="Gygi S.P."/>
        </authorList>
    </citation>
    <scope>IDENTIFICATION BY MASS SPECTROMETRY [LARGE SCALE ANALYSIS]</scope>
    <source>
        <tissue>Heart</tissue>
        <tissue>Kidney</tissue>
        <tissue>Liver</tissue>
        <tissue>Lung</tissue>
        <tissue>Pancreas</tissue>
    </source>
</reference>
<accession>Q4PZA2</accession>
<accession>B1AXF9</accession>
<accession>Q4PZ99</accession>
<accession>Q4PZA1</accession>
<accession>Q6P9Q9</accession>
<gene>
    <name type="primary">Ece1</name>
</gene>
<keyword id="KW-0025">Alternative splicing</keyword>
<keyword id="KW-1003">Cell membrane</keyword>
<keyword id="KW-1015">Disulfide bond</keyword>
<keyword id="KW-0325">Glycoprotein</keyword>
<keyword id="KW-0378">Hydrolase</keyword>
<keyword id="KW-0472">Membrane</keyword>
<keyword id="KW-0479">Metal-binding</keyword>
<keyword id="KW-0482">Metalloprotease</keyword>
<keyword id="KW-0597">Phosphoprotein</keyword>
<keyword id="KW-0645">Protease</keyword>
<keyword id="KW-1185">Reference proteome</keyword>
<keyword id="KW-0735">Signal-anchor</keyword>
<keyword id="KW-0812">Transmembrane</keyword>
<keyword id="KW-1133">Transmembrane helix</keyword>
<keyword id="KW-0862">Zinc</keyword>
<name>ECE1_MOUSE</name>
<protein>
    <recommendedName>
        <fullName>Endothelin-converting enzyme 1</fullName>
        <shortName>ECE-1</shortName>
        <ecNumber>3.4.24.71</ecNumber>
    </recommendedName>
</protein>